<protein>
    <recommendedName>
        <fullName evidence="1">L-seryl-tRNA(Sec) selenium transferase</fullName>
        <ecNumber evidence="1">2.9.1.1</ecNumber>
    </recommendedName>
    <alternativeName>
        <fullName evidence="1">Selenocysteine synthase</fullName>
        <shortName evidence="1">Sec synthase</shortName>
    </alternativeName>
    <alternativeName>
        <fullName evidence="1">Selenocysteinyl-tRNA(Sec) synthase</fullName>
    </alternativeName>
</protein>
<accession>A7GHJ2</accession>
<gene>
    <name evidence="1" type="primary">selA</name>
    <name type="ordered locus">CLI_3030</name>
</gene>
<sequence>MDKKQLLRNLPKIDELLKEEIVNRYLQENSRTLVVDSLRQSIDHYRGEILKNNIDSFTKENVVNYFIDTLEENKSTKFKKVINATGVVIHTNLGRSLLAKEAIENVVKISENYSNLEYDLKEGKRGSRYSHVEELIKKVTGAEAAMVVNNNAAAVMLALNTLCEEREAIVSRGQLVEIGGSFRVPDVMKFSRAHLVEVGTTNRTHLYDYENNINENTGVLLKVHTSNFKIMGFTEEVSSEEMVQLGGKYKLPVMEDIGSGTLVDFSKYGFTYEPTVQSSLEKGVDVVTFSGDKMLGGPQAGIIVGKKKYIDKMKKNQLTRALRIDKMTLAALEGTLKCYIDEKEAIENIPTLNMILSSKDIHKKRAQRLKRRLQNNVKDFNFKVSEDLSMVGGGSMPGERIPTYVVKVNSDKITAEKIEEKLRLSKNPIIVRVSKDEVILDVRTLFERDFNIIVEEFKKLLK</sequence>
<dbReference type="EC" id="2.9.1.1" evidence="1"/>
<dbReference type="EMBL" id="CP000728">
    <property type="protein sequence ID" value="ABS39749.1"/>
    <property type="molecule type" value="Genomic_DNA"/>
</dbReference>
<dbReference type="RefSeq" id="WP_012100737.1">
    <property type="nucleotide sequence ID" value="NC_009699.1"/>
</dbReference>
<dbReference type="SMR" id="A7GHJ2"/>
<dbReference type="KEGG" id="cbf:CLI_3030"/>
<dbReference type="HOGENOM" id="CLU_038142_1_0_9"/>
<dbReference type="UniPathway" id="UPA00906">
    <property type="reaction ID" value="UER00896"/>
</dbReference>
<dbReference type="Proteomes" id="UP000002410">
    <property type="component" value="Chromosome"/>
</dbReference>
<dbReference type="GO" id="GO:0005737">
    <property type="term" value="C:cytoplasm"/>
    <property type="evidence" value="ECO:0007669"/>
    <property type="project" value="UniProtKB-SubCell"/>
</dbReference>
<dbReference type="GO" id="GO:0004125">
    <property type="term" value="F:L-seryl-tRNA(Sec) selenium transferase activity"/>
    <property type="evidence" value="ECO:0007669"/>
    <property type="project" value="UniProtKB-UniRule"/>
</dbReference>
<dbReference type="GO" id="GO:0001717">
    <property type="term" value="P:conversion of seryl-tRNAsec to selenocys-tRNAsec"/>
    <property type="evidence" value="ECO:0007669"/>
    <property type="project" value="UniProtKB-UniRule"/>
</dbReference>
<dbReference type="GO" id="GO:0001514">
    <property type="term" value="P:selenocysteine incorporation"/>
    <property type="evidence" value="ECO:0007669"/>
    <property type="project" value="UniProtKB-UniRule"/>
</dbReference>
<dbReference type="FunFam" id="3.40.640.10:FF:000028">
    <property type="entry name" value="L-seryl-tRNA(Sec) selenium transferase"/>
    <property type="match status" value="1"/>
</dbReference>
<dbReference type="Gene3D" id="3.90.1150.180">
    <property type="match status" value="1"/>
</dbReference>
<dbReference type="Gene3D" id="3.40.640.10">
    <property type="entry name" value="Type I PLP-dependent aspartate aminotransferase-like (Major domain)"/>
    <property type="match status" value="1"/>
</dbReference>
<dbReference type="HAMAP" id="MF_00423">
    <property type="entry name" value="SelA"/>
    <property type="match status" value="1"/>
</dbReference>
<dbReference type="InterPro" id="IPR015424">
    <property type="entry name" value="PyrdxlP-dep_Trfase"/>
</dbReference>
<dbReference type="InterPro" id="IPR015421">
    <property type="entry name" value="PyrdxlP-dep_Trfase_major"/>
</dbReference>
<dbReference type="InterPro" id="IPR018319">
    <property type="entry name" value="SelA-like"/>
</dbReference>
<dbReference type="InterPro" id="IPR004534">
    <property type="entry name" value="SelA_trans"/>
</dbReference>
<dbReference type="InterPro" id="IPR025862">
    <property type="entry name" value="SelA_trans_N_dom"/>
</dbReference>
<dbReference type="NCBIfam" id="TIGR00474">
    <property type="entry name" value="selA"/>
    <property type="match status" value="1"/>
</dbReference>
<dbReference type="PANTHER" id="PTHR32328">
    <property type="entry name" value="L-SERYL-TRNA(SEC) SELENIUM TRANSFERASE"/>
    <property type="match status" value="1"/>
</dbReference>
<dbReference type="PANTHER" id="PTHR32328:SF0">
    <property type="entry name" value="L-SERYL-TRNA(SEC) SELENIUM TRANSFERASE"/>
    <property type="match status" value="1"/>
</dbReference>
<dbReference type="Pfam" id="PF12390">
    <property type="entry name" value="Se-cys_synth_N"/>
    <property type="match status" value="1"/>
</dbReference>
<dbReference type="Pfam" id="PF03841">
    <property type="entry name" value="SelA"/>
    <property type="match status" value="1"/>
</dbReference>
<dbReference type="SUPFAM" id="SSF53383">
    <property type="entry name" value="PLP-dependent transferases"/>
    <property type="match status" value="1"/>
</dbReference>
<feature type="chain" id="PRO_1000072306" description="L-seryl-tRNA(Sec) selenium transferase">
    <location>
        <begin position="1"/>
        <end position="462"/>
    </location>
</feature>
<feature type="modified residue" description="N6-(pyridoxal phosphate)lysine" evidence="1">
    <location>
        <position position="293"/>
    </location>
</feature>
<comment type="function">
    <text evidence="1">Converts seryl-tRNA(Sec) to selenocysteinyl-tRNA(Sec) required for selenoprotein biosynthesis.</text>
</comment>
<comment type="catalytic activity">
    <reaction evidence="1">
        <text>L-seryl-tRNA(Sec) + selenophosphate + H(+) = L-selenocysteinyl-tRNA(Sec) + phosphate</text>
        <dbReference type="Rhea" id="RHEA:22728"/>
        <dbReference type="Rhea" id="RHEA-COMP:9742"/>
        <dbReference type="Rhea" id="RHEA-COMP:9743"/>
        <dbReference type="ChEBI" id="CHEBI:15378"/>
        <dbReference type="ChEBI" id="CHEBI:16144"/>
        <dbReference type="ChEBI" id="CHEBI:43474"/>
        <dbReference type="ChEBI" id="CHEBI:78533"/>
        <dbReference type="ChEBI" id="CHEBI:78573"/>
        <dbReference type="EC" id="2.9.1.1"/>
    </reaction>
</comment>
<comment type="cofactor">
    <cofactor evidence="1">
        <name>pyridoxal 5'-phosphate</name>
        <dbReference type="ChEBI" id="CHEBI:597326"/>
    </cofactor>
</comment>
<comment type="pathway">
    <text evidence="1">Aminoacyl-tRNA biosynthesis; selenocysteinyl-tRNA(Sec) biosynthesis; selenocysteinyl-tRNA(Sec) from L-seryl-tRNA(Sec) (bacterial route): step 1/1.</text>
</comment>
<comment type="subcellular location">
    <subcellularLocation>
        <location evidence="1">Cytoplasm</location>
    </subcellularLocation>
</comment>
<comment type="similarity">
    <text evidence="1">Belongs to the SelA family.</text>
</comment>
<name>SELA_CLOBL</name>
<evidence type="ECO:0000255" key="1">
    <source>
        <dbReference type="HAMAP-Rule" id="MF_00423"/>
    </source>
</evidence>
<proteinExistence type="inferred from homology"/>
<organism>
    <name type="scientific">Clostridium botulinum (strain Langeland / NCTC 10281 / Type F)</name>
    <dbReference type="NCBI Taxonomy" id="441772"/>
    <lineage>
        <taxon>Bacteria</taxon>
        <taxon>Bacillati</taxon>
        <taxon>Bacillota</taxon>
        <taxon>Clostridia</taxon>
        <taxon>Eubacteriales</taxon>
        <taxon>Clostridiaceae</taxon>
        <taxon>Clostridium</taxon>
    </lineage>
</organism>
<keyword id="KW-0963">Cytoplasm</keyword>
<keyword id="KW-0648">Protein biosynthesis</keyword>
<keyword id="KW-0663">Pyridoxal phosphate</keyword>
<keyword id="KW-0711">Selenium</keyword>
<keyword id="KW-0808">Transferase</keyword>
<reference key="1">
    <citation type="submission" date="2007-06" db="EMBL/GenBank/DDBJ databases">
        <authorList>
            <person name="Brinkac L.M."/>
            <person name="Daugherty S."/>
            <person name="Dodson R.J."/>
            <person name="Madupu R."/>
            <person name="Brown J.L."/>
            <person name="Bruce D."/>
            <person name="Detter C."/>
            <person name="Munk C."/>
            <person name="Smith L.A."/>
            <person name="Smith T.J."/>
            <person name="White O."/>
            <person name="Brettin T.S."/>
        </authorList>
    </citation>
    <scope>NUCLEOTIDE SEQUENCE [LARGE SCALE GENOMIC DNA]</scope>
    <source>
        <strain>Langeland / NCTC 10281 / Type F</strain>
    </source>
</reference>